<proteinExistence type="evidence at protein level"/>
<evidence type="ECO:0000250" key="1">
    <source>
        <dbReference type="UniProtKB" id="O15492"/>
    </source>
</evidence>
<evidence type="ECO:0000255" key="2">
    <source>
        <dbReference type="PROSITE-ProRule" id="PRU00171"/>
    </source>
</evidence>
<evidence type="ECO:0000256" key="3">
    <source>
        <dbReference type="SAM" id="MobiDB-lite"/>
    </source>
</evidence>
<evidence type="ECO:0000269" key="4">
    <source>
    </source>
</evidence>
<evidence type="ECO:0000269" key="5">
    <source>
    </source>
</evidence>
<evidence type="ECO:0000269" key="6">
    <source>
    </source>
</evidence>
<evidence type="ECO:0000269" key="7">
    <source>
    </source>
</evidence>
<evidence type="ECO:0000303" key="8">
    <source>
    </source>
</evidence>
<evidence type="ECO:0000305" key="9"/>
<evidence type="ECO:0000305" key="10">
    <source>
    </source>
</evidence>
<evidence type="ECO:0007829" key="11">
    <source>
        <dbReference type="PDB" id="3C7L"/>
    </source>
</evidence>
<sequence>MCRTLATFPNTCLERAKEFKTRLGIFLHKSELSSDTGGISKFEWASKHNKERSFSEDVLGWRESFDLLLNSKNGVAAFHAFLKTEFSEENLEFWLACEEFKKIRSATKLASRAHHIFDEYIRSEAPKEVNIDHETRELTKTNLQAATTSCFDVAQGKTRTLMEKDSYPRFLKSPAYRDLAAQASATSTSAPSGSPAEPSHT</sequence>
<protein>
    <recommendedName>
        <fullName>Regulator of G-protein signaling 16</fullName>
        <shortName>RGS16</shortName>
    </recommendedName>
    <alternativeName>
        <fullName>A28-RGS14P</fullName>
    </alternativeName>
    <alternativeName>
        <fullName>Retinal-specific RGS</fullName>
        <shortName evidence="8">RGS-r</shortName>
    </alternativeName>
    <alternativeName>
        <fullName>Retinally abundant regulator of G-protein signaling</fullName>
    </alternativeName>
</protein>
<name>RGS16_MOUSE</name>
<keyword id="KW-0002">3D-structure</keyword>
<keyword id="KW-0343">GTPase activation</keyword>
<keyword id="KW-0449">Lipoprotein</keyword>
<keyword id="KW-0472">Membrane</keyword>
<keyword id="KW-0564">Palmitate</keyword>
<keyword id="KW-0597">Phosphoprotein</keyword>
<keyword id="KW-1185">Reference proteome</keyword>
<keyword id="KW-0734">Signal transduction inhibitor</keyword>
<feature type="chain" id="PRO_0000204222" description="Regulator of G-protein signaling 16">
    <location>
        <begin position="1"/>
        <end position="201"/>
    </location>
</feature>
<feature type="domain" description="RGS" evidence="2">
    <location>
        <begin position="64"/>
        <end position="180"/>
    </location>
</feature>
<feature type="region of interest" description="Disordered" evidence="3">
    <location>
        <begin position="181"/>
        <end position="201"/>
    </location>
</feature>
<feature type="modified residue" description="Phosphotyrosine; by EGFR" evidence="1">
    <location>
        <position position="167"/>
    </location>
</feature>
<feature type="modified residue" description="Phosphotyrosine" evidence="1">
    <location>
        <position position="176"/>
    </location>
</feature>
<feature type="lipid moiety-binding region" description="S-palmitoyl cysteine" evidence="10">
    <location>
        <position position="2"/>
    </location>
</feature>
<feature type="lipid moiety-binding region" description="S-palmitoyl cysteine" evidence="10">
    <location>
        <position position="12"/>
    </location>
</feature>
<feature type="sequence conflict" description="In Ref. 3; AAC16913." evidence="9" ref="3">
    <original>E</original>
    <variation>EN</variation>
    <location>
        <position position="51"/>
    </location>
</feature>
<feature type="sequence conflict" description="In Ref. 3; AAC16913." evidence="9" ref="3">
    <original>H</original>
    <variation>Q</variation>
    <location>
        <position position="115"/>
    </location>
</feature>
<feature type="sequence conflict" description="In Ref. 3; AAC16913." evidence="9" ref="3">
    <original>D</original>
    <variation>E</variation>
    <location>
        <position position="118"/>
    </location>
</feature>
<feature type="sequence conflict" description="In Ref. 3; AAC16913." evidence="9" ref="3">
    <original>A</original>
    <variation>V</variation>
    <location>
        <position position="190"/>
    </location>
</feature>
<feature type="helix" evidence="11">
    <location>
        <begin position="58"/>
        <end position="63"/>
    </location>
</feature>
<feature type="helix" evidence="11">
    <location>
        <begin position="65"/>
        <end position="68"/>
    </location>
</feature>
<feature type="helix" evidence="11">
    <location>
        <begin position="72"/>
        <end position="83"/>
    </location>
</feature>
<feature type="turn" evidence="11">
    <location>
        <begin position="84"/>
        <end position="86"/>
    </location>
</feature>
<feature type="helix" evidence="11">
    <location>
        <begin position="88"/>
        <end position="100"/>
    </location>
</feature>
<feature type="helix" evidence="11">
    <location>
        <begin position="106"/>
        <end position="120"/>
    </location>
</feature>
<feature type="helix" evidence="11">
    <location>
        <begin position="133"/>
        <end position="144"/>
    </location>
</feature>
<feature type="turn" evidence="11">
    <location>
        <begin position="148"/>
        <end position="151"/>
    </location>
</feature>
<feature type="helix" evidence="11">
    <location>
        <begin position="152"/>
        <end position="163"/>
    </location>
</feature>
<feature type="helix" evidence="11">
    <location>
        <begin position="166"/>
        <end position="171"/>
    </location>
</feature>
<feature type="helix" evidence="11">
    <location>
        <begin position="174"/>
        <end position="177"/>
    </location>
</feature>
<comment type="function">
    <text evidence="4 6 9">Regulates G protein-coupled receptor signaling cascades (PubMed:9079700). Inhibits signal transduction by increasing the GTPase activity of G protein alpha subunits, thereby driving them into their inactive GDP-bound form (PubMed:10373502). Plays an important role in the phototransduction cascade by regulating the lifetime and effective concentration of activated transducin alpha (PubMed:8917514). May regulate extra and intracellular mitogenic signals.</text>
</comment>
<comment type="subunit">
    <text evidence="1 5 7">Interacts with GNAI1 and GNAQ (By similarity). Interacts with GNAI3, GNAI3 and GNAO1 (PubMed:18434540, PubMed:9079700).</text>
</comment>
<comment type="interaction">
    <interactant intactId="EBI-643424">
        <id>P97428</id>
    </interactant>
    <interactant intactId="EBI-1018790">
        <id>P18872-1</id>
        <label>Gnao1</label>
    </interactant>
    <organismsDiffer>false</organismsDiffer>
    <experiments>2</experiments>
</comment>
<comment type="subcellular location">
    <subcellularLocation>
        <location evidence="4">Membrane</location>
        <topology evidence="4">Lipid-anchor</topology>
    </subcellularLocation>
</comment>
<comment type="tissue specificity">
    <text>Retinal; also predominantly expressed in the liver and pituitary.</text>
</comment>
<comment type="PTM">
    <text evidence="4">Palmitoylated on Cys-2 and/or Cys-12.</text>
</comment>
<comment type="PTM">
    <text evidence="1">Phosphorylated. Phosphorylation at Tyr-167 by EGFR enhances GTPase accelerating (GAP) activity toward GNAI1.</text>
</comment>
<dbReference type="EMBL" id="U72881">
    <property type="protein sequence ID" value="AAC52927.1"/>
    <property type="molecule type" value="mRNA"/>
</dbReference>
<dbReference type="EMBL" id="U67189">
    <property type="protein sequence ID" value="AAB50619.1"/>
    <property type="molecule type" value="mRNA"/>
</dbReference>
<dbReference type="EMBL" id="U70427">
    <property type="protein sequence ID" value="AAC16913.1"/>
    <property type="molecule type" value="Genomic_DNA"/>
</dbReference>
<dbReference type="EMBL" id="U94828">
    <property type="protein sequence ID" value="AAC53549.1"/>
    <property type="molecule type" value="mRNA"/>
</dbReference>
<dbReference type="EMBL" id="BC010980">
    <property type="protein sequence ID" value="AAH10980.1"/>
    <property type="molecule type" value="mRNA"/>
</dbReference>
<dbReference type="EMBL" id="BC049968">
    <property type="protein sequence ID" value="AAH49968.2"/>
    <property type="molecule type" value="mRNA"/>
</dbReference>
<dbReference type="CCDS" id="CCDS15376.1"/>
<dbReference type="RefSeq" id="NP_035397.2">
    <property type="nucleotide sequence ID" value="NM_011267.4"/>
</dbReference>
<dbReference type="PDB" id="3C7K">
    <property type="method" value="X-ray"/>
    <property type="resolution" value="2.90 A"/>
    <property type="chains" value="B/D=53-180"/>
</dbReference>
<dbReference type="PDB" id="3C7L">
    <property type="method" value="X-ray"/>
    <property type="resolution" value="1.89 A"/>
    <property type="chains" value="A/B=53-180"/>
</dbReference>
<dbReference type="PDBsum" id="3C7K"/>
<dbReference type="PDBsum" id="3C7L"/>
<dbReference type="SMR" id="P97428"/>
<dbReference type="DIP" id="DIP-29922N"/>
<dbReference type="ELM" id="P97428"/>
<dbReference type="FunCoup" id="P97428">
    <property type="interactions" value="144"/>
</dbReference>
<dbReference type="IntAct" id="P97428">
    <property type="interactions" value="2"/>
</dbReference>
<dbReference type="STRING" id="10090.ENSMUSP00000027748"/>
<dbReference type="iPTMnet" id="P97428"/>
<dbReference type="PhosphoSitePlus" id="P97428"/>
<dbReference type="SwissPalm" id="P97428"/>
<dbReference type="PaxDb" id="10090-ENSMUSP00000027748"/>
<dbReference type="ProteomicsDB" id="254952"/>
<dbReference type="Antibodypedia" id="34439">
    <property type="antibodies" value="361 antibodies from 25 providers"/>
</dbReference>
<dbReference type="DNASU" id="19734"/>
<dbReference type="Ensembl" id="ENSMUST00000027748.8">
    <property type="protein sequence ID" value="ENSMUSP00000027748.8"/>
    <property type="gene ID" value="ENSMUSG00000026475.8"/>
</dbReference>
<dbReference type="GeneID" id="19734"/>
<dbReference type="KEGG" id="mmu:19734"/>
<dbReference type="UCSC" id="uc007dae.2">
    <property type="organism name" value="mouse"/>
</dbReference>
<dbReference type="AGR" id="MGI:108407"/>
<dbReference type="CTD" id="6004"/>
<dbReference type="MGI" id="MGI:108407">
    <property type="gene designation" value="Rgs16"/>
</dbReference>
<dbReference type="VEuPathDB" id="HostDB:ENSMUSG00000026475"/>
<dbReference type="eggNOG" id="KOG3589">
    <property type="taxonomic scope" value="Eukaryota"/>
</dbReference>
<dbReference type="GeneTree" id="ENSGT00940000154304"/>
<dbReference type="HOGENOM" id="CLU_059863_3_0_1"/>
<dbReference type="InParanoid" id="P97428"/>
<dbReference type="OMA" id="KTHTLME"/>
<dbReference type="OrthoDB" id="196547at2759"/>
<dbReference type="PhylomeDB" id="P97428"/>
<dbReference type="TreeFam" id="TF315837"/>
<dbReference type="Reactome" id="R-MMU-416476">
    <property type="pathway name" value="G alpha (q) signalling events"/>
</dbReference>
<dbReference type="Reactome" id="R-MMU-418594">
    <property type="pathway name" value="G alpha (i) signalling events"/>
</dbReference>
<dbReference type="Reactome" id="R-MMU-418597">
    <property type="pathway name" value="G alpha (z) signalling events"/>
</dbReference>
<dbReference type="BioGRID-ORCS" id="19734">
    <property type="hits" value="2 hits in 77 CRISPR screens"/>
</dbReference>
<dbReference type="ChiTaRS" id="Rgs16">
    <property type="organism name" value="mouse"/>
</dbReference>
<dbReference type="EvolutionaryTrace" id="P97428"/>
<dbReference type="PRO" id="PR:P97428"/>
<dbReference type="Proteomes" id="UP000000589">
    <property type="component" value="Chromosome 1"/>
</dbReference>
<dbReference type="RNAct" id="P97428">
    <property type="molecule type" value="protein"/>
</dbReference>
<dbReference type="Bgee" id="ENSMUSG00000026475">
    <property type="expression patterns" value="Expressed in medial geniculate body and 219 other cell types or tissues"/>
</dbReference>
<dbReference type="ExpressionAtlas" id="P97428">
    <property type="expression patterns" value="baseline and differential"/>
</dbReference>
<dbReference type="GO" id="GO:0005737">
    <property type="term" value="C:cytoplasm"/>
    <property type="evidence" value="ECO:0000304"/>
    <property type="project" value="MGI"/>
</dbReference>
<dbReference type="GO" id="GO:0016020">
    <property type="term" value="C:membrane"/>
    <property type="evidence" value="ECO:0000314"/>
    <property type="project" value="UniProtKB"/>
</dbReference>
<dbReference type="GO" id="GO:0005096">
    <property type="term" value="F:GTPase activator activity"/>
    <property type="evidence" value="ECO:0000314"/>
    <property type="project" value="UniProtKB"/>
</dbReference>
<dbReference type="GO" id="GO:0007186">
    <property type="term" value="P:G protein-coupled receptor signaling pathway"/>
    <property type="evidence" value="ECO:0000314"/>
    <property type="project" value="UniProtKB"/>
</dbReference>
<dbReference type="GO" id="GO:0009968">
    <property type="term" value="P:negative regulation of signal transduction"/>
    <property type="evidence" value="ECO:0007669"/>
    <property type="project" value="UniProtKB-KW"/>
</dbReference>
<dbReference type="GO" id="GO:0043547">
    <property type="term" value="P:positive regulation of GTPase activity"/>
    <property type="evidence" value="ECO:0000314"/>
    <property type="project" value="UniProtKB"/>
</dbReference>
<dbReference type="CDD" id="cd08710">
    <property type="entry name" value="RGS_RGS16"/>
    <property type="match status" value="1"/>
</dbReference>
<dbReference type="FunFam" id="1.10.167.10:FF:000001">
    <property type="entry name" value="Putative regulator of g-protein signaling 12"/>
    <property type="match status" value="1"/>
</dbReference>
<dbReference type="FunFam" id="1.10.196.10:FF:000001">
    <property type="entry name" value="Regulator of G-protein signaling 8"/>
    <property type="match status" value="1"/>
</dbReference>
<dbReference type="Gene3D" id="1.10.196.10">
    <property type="match status" value="1"/>
</dbReference>
<dbReference type="Gene3D" id="1.10.167.10">
    <property type="entry name" value="Regulator of G-protein Signalling 4, domain 2"/>
    <property type="match status" value="1"/>
</dbReference>
<dbReference type="InterPro" id="IPR016137">
    <property type="entry name" value="RGS"/>
</dbReference>
<dbReference type="InterPro" id="IPR036305">
    <property type="entry name" value="RGS_sf"/>
</dbReference>
<dbReference type="InterPro" id="IPR024066">
    <property type="entry name" value="RGS_subdom1/3"/>
</dbReference>
<dbReference type="InterPro" id="IPR044926">
    <property type="entry name" value="RGS_subdomain_2"/>
</dbReference>
<dbReference type="PANTHER" id="PTHR10845">
    <property type="entry name" value="REGULATOR OF G PROTEIN SIGNALING"/>
    <property type="match status" value="1"/>
</dbReference>
<dbReference type="PANTHER" id="PTHR10845:SF187">
    <property type="entry name" value="REGULATOR OF G-PROTEIN SIGNALING 16"/>
    <property type="match status" value="1"/>
</dbReference>
<dbReference type="Pfam" id="PF00615">
    <property type="entry name" value="RGS"/>
    <property type="match status" value="1"/>
</dbReference>
<dbReference type="PRINTS" id="PR01301">
    <property type="entry name" value="RGSPROTEIN"/>
</dbReference>
<dbReference type="SMART" id="SM00315">
    <property type="entry name" value="RGS"/>
    <property type="match status" value="1"/>
</dbReference>
<dbReference type="SUPFAM" id="SSF48097">
    <property type="entry name" value="Regulator of G-protein signaling, RGS"/>
    <property type="match status" value="1"/>
</dbReference>
<dbReference type="PROSITE" id="PS50132">
    <property type="entry name" value="RGS"/>
    <property type="match status" value="1"/>
</dbReference>
<gene>
    <name type="primary">Rgs16</name>
    <name type="synonym">Rgsr</name>
</gene>
<reference key="1">
    <citation type="journal article" date="1996" name="Proc. Natl. Acad. Sci. U.S.A.">
        <title>RGS-r, a retinal specific RGS protein, binds an intermediate conformation of transducin and enhances recycling.</title>
        <authorList>
            <person name="Chen C.-K."/>
            <person name="Wieland T."/>
            <person name="Simon M.I."/>
        </authorList>
    </citation>
    <scope>NUCLEOTIDE SEQUENCE [MRNA]</scope>
    <scope>FUNCTION</scope>
    <source>
        <tissue>Retina</tissue>
    </source>
</reference>
<reference key="2">
    <citation type="journal article" date="1997" name="J. Biol. Chem.">
        <title>Characterization of a novel mammalian RGS protein that binds to Galpha proteins and inhibits pheromone signaling in yeast.</title>
        <authorList>
            <person name="Chen C."/>
            <person name="Zheng B."/>
            <person name="Han J."/>
            <person name="Lin S.-C."/>
        </authorList>
    </citation>
    <scope>NUCLEOTIDE SEQUENCE [MRNA]</scope>
    <scope>FUNCTION</scope>
    <scope>INTERACTION WITH GNAI3; GNAO1 AND GNAI2</scope>
    <source>
        <tissue>Pituitary</tissue>
    </source>
</reference>
<reference key="3">
    <citation type="journal article" date="1997" name="Proc. Natl. Acad. Sci. U.S.A.">
        <title>The p53 tumor suppressor targets a novel regulator of G protein signaling.</title>
        <authorList>
            <person name="Buckbinder L."/>
            <person name="Velasco-Miguel S."/>
            <person name="Chen Y."/>
            <person name="Xu N."/>
            <person name="Talbott R."/>
            <person name="Gelbert L."/>
            <person name="Gao J."/>
            <person name="Seizinger B.R."/>
            <person name="Gutkind J.S."/>
            <person name="Kley N."/>
        </authorList>
    </citation>
    <scope>NUCLEOTIDE SEQUENCE [GENOMIC DNA]</scope>
    <source>
        <tissue>Brain</tissue>
    </source>
</reference>
<reference key="4">
    <citation type="journal article" date="1998" name="Gene">
        <title>Cloning of a retinally abundant regulator of G-protein signaling (RGS-r/RGS16): genomic structure and chromosomal localization of the human gene.</title>
        <authorList>
            <person name="Snow B.E."/>
            <person name="Antonio L."/>
            <person name="Suggs S."/>
            <person name="Siderovski D.P."/>
        </authorList>
    </citation>
    <scope>NUCLEOTIDE SEQUENCE [MRNA]</scope>
    <source>
        <tissue>Placenta</tissue>
    </source>
</reference>
<reference key="5">
    <citation type="journal article" date="2004" name="Genome Res.">
        <title>The status, quality, and expansion of the NIH full-length cDNA project: the Mammalian Gene Collection (MGC).</title>
        <authorList>
            <consortium name="The MGC Project Team"/>
        </authorList>
    </citation>
    <scope>NUCLEOTIDE SEQUENCE [LARGE SCALE MRNA]</scope>
    <source>
        <strain>Czech II</strain>
        <tissue>Mammary gland</tissue>
    </source>
</reference>
<reference key="6">
    <citation type="journal article" date="1999" name="J. Biol. Chem.">
        <title>Amino-terminal cysteine residues of RGS16 are required for palmitoylation and modulation of Gi- and Gq-mediated signaling.</title>
        <authorList>
            <person name="Druey K.M."/>
            <person name="Ugur O."/>
            <person name="Caron J.M."/>
            <person name="Chen C.-K."/>
            <person name="Backlund P.S."/>
            <person name="Jones T.L.Z."/>
        </authorList>
    </citation>
    <scope>PALMITOYLATION AT CYS-2 AND CYS-12</scope>
    <scope>FUNCTION</scope>
    <scope>SUBCELLULAR LOCATION</scope>
</reference>
<reference key="7">
    <citation type="journal article" date="2008" name="Proc. Natl. Acad. Sci. U.S.A.">
        <title>Molecular architecture of Galphao and the structural basis for RGS16-mediated deactivation.</title>
        <authorList>
            <person name="Slep K.C."/>
            <person name="Kercher M.A."/>
            <person name="Wieland T."/>
            <person name="Chen C.K."/>
            <person name="Simon M.I."/>
            <person name="Sigler P.B."/>
        </authorList>
    </citation>
    <scope>X-RAY CRYSTALLOGRAPHY (1.89 ANGSTROMS) OF 53-180 IN COMPLEX WITH GNAO1</scope>
    <scope>INTERACTION WITH GNAO1</scope>
</reference>
<organism>
    <name type="scientific">Mus musculus</name>
    <name type="common">Mouse</name>
    <dbReference type="NCBI Taxonomy" id="10090"/>
    <lineage>
        <taxon>Eukaryota</taxon>
        <taxon>Metazoa</taxon>
        <taxon>Chordata</taxon>
        <taxon>Craniata</taxon>
        <taxon>Vertebrata</taxon>
        <taxon>Euteleostomi</taxon>
        <taxon>Mammalia</taxon>
        <taxon>Eutheria</taxon>
        <taxon>Euarchontoglires</taxon>
        <taxon>Glires</taxon>
        <taxon>Rodentia</taxon>
        <taxon>Myomorpha</taxon>
        <taxon>Muroidea</taxon>
        <taxon>Muridae</taxon>
        <taxon>Murinae</taxon>
        <taxon>Mus</taxon>
        <taxon>Mus</taxon>
    </lineage>
</organism>
<accession>P97428</accession>
<accession>O09091</accession>
<accession>P97420</accession>
<accession>Q80V16</accession>